<comment type="function">
    <text evidence="1">Serine protease inhibitor.</text>
</comment>
<comment type="subcellular location">
    <subcellularLocation>
        <location evidence="1">Secreted</location>
    </subcellularLocation>
</comment>
<comment type="tissue specificity">
    <text>Expressed by the venom gland.</text>
</comment>
<comment type="similarity">
    <text evidence="3">Belongs to the venom Kunitz-type family.</text>
</comment>
<keyword id="KW-1015">Disulfide bond</keyword>
<keyword id="KW-0646">Protease inhibitor</keyword>
<keyword id="KW-0964">Secreted</keyword>
<keyword id="KW-0722">Serine protease inhibitor</keyword>
<keyword id="KW-0732">Signal</keyword>
<dbReference type="EMBL" id="AM411363">
    <property type="protein sequence ID" value="CAL69604.1"/>
    <property type="molecule type" value="mRNA"/>
</dbReference>
<dbReference type="SMR" id="A8Y7N6"/>
<dbReference type="MEROPS" id="I02.062"/>
<dbReference type="GO" id="GO:0005615">
    <property type="term" value="C:extracellular space"/>
    <property type="evidence" value="ECO:0007669"/>
    <property type="project" value="TreeGrafter"/>
</dbReference>
<dbReference type="GO" id="GO:0004867">
    <property type="term" value="F:serine-type endopeptidase inhibitor activity"/>
    <property type="evidence" value="ECO:0007669"/>
    <property type="project" value="UniProtKB-KW"/>
</dbReference>
<dbReference type="CDD" id="cd22608">
    <property type="entry name" value="Kunitz_PPTI-like"/>
    <property type="match status" value="1"/>
</dbReference>
<dbReference type="FunFam" id="4.10.410.10:FF:000021">
    <property type="entry name" value="Serine protease inhibitor, putative"/>
    <property type="match status" value="1"/>
</dbReference>
<dbReference type="Gene3D" id="4.10.410.10">
    <property type="entry name" value="Pancreatic trypsin inhibitor Kunitz domain"/>
    <property type="match status" value="1"/>
</dbReference>
<dbReference type="InterPro" id="IPR002223">
    <property type="entry name" value="Kunitz_BPTI"/>
</dbReference>
<dbReference type="InterPro" id="IPR036880">
    <property type="entry name" value="Kunitz_BPTI_sf"/>
</dbReference>
<dbReference type="InterPro" id="IPR020901">
    <property type="entry name" value="Prtase_inh_Kunz-CS"/>
</dbReference>
<dbReference type="InterPro" id="IPR050098">
    <property type="entry name" value="TFPI/VKTCI-like"/>
</dbReference>
<dbReference type="PANTHER" id="PTHR10083">
    <property type="entry name" value="KUNITZ-TYPE PROTEASE INHIBITOR-RELATED"/>
    <property type="match status" value="1"/>
</dbReference>
<dbReference type="PANTHER" id="PTHR10083:SF376">
    <property type="entry name" value="SERINE PEPTIDASE INHIBITOR, KUNITZ TYPE, 3"/>
    <property type="match status" value="1"/>
</dbReference>
<dbReference type="Pfam" id="PF00014">
    <property type="entry name" value="Kunitz_BPTI"/>
    <property type="match status" value="1"/>
</dbReference>
<dbReference type="PRINTS" id="PR00759">
    <property type="entry name" value="BASICPTASE"/>
</dbReference>
<dbReference type="SMART" id="SM00131">
    <property type="entry name" value="KU"/>
    <property type="match status" value="1"/>
</dbReference>
<dbReference type="SUPFAM" id="SSF57362">
    <property type="entry name" value="BPTI-like"/>
    <property type="match status" value="1"/>
</dbReference>
<dbReference type="PROSITE" id="PS00280">
    <property type="entry name" value="BPTI_KUNITZ_1"/>
    <property type="match status" value="1"/>
</dbReference>
<dbReference type="PROSITE" id="PS50279">
    <property type="entry name" value="BPTI_KUNITZ_2"/>
    <property type="match status" value="1"/>
</dbReference>
<protein>
    <recommendedName>
        <fullName>Kunitz-type serine protease inhibitor C3</fullName>
    </recommendedName>
    <alternativeName>
        <fullName>BPTI-3</fullName>
    </alternativeName>
    <alternativeName>
        <fullName>Trypsin inhibitor 3</fullName>
    </alternativeName>
    <alternativeName>
        <fullName>Trypsin inhibitor C3</fullName>
    </alternativeName>
</protein>
<sequence length="84" mass="9443">MSSGGLLLLLGLLTLWAELTPISGHDRPKFCYLPADPGECMAYIRSFYYDSESKKCKEFIYGGCHGNANNFPTRDKCRQTCRGK</sequence>
<feature type="signal peptide" evidence="1">
    <location>
        <begin position="1"/>
        <end position="24"/>
    </location>
</feature>
<feature type="chain" id="PRO_5000284429" description="Kunitz-type serine protease inhibitor C3">
    <location>
        <begin position="25"/>
        <end position="84"/>
    </location>
</feature>
<feature type="domain" description="BPTI/Kunitz inhibitor" evidence="2">
    <location>
        <begin position="31"/>
        <end position="81"/>
    </location>
</feature>
<feature type="site" description="Reactive bond for chymotrypsin" evidence="1">
    <location>
        <begin position="41"/>
        <end position="42"/>
    </location>
</feature>
<feature type="disulfide bond" evidence="2">
    <location>
        <begin position="31"/>
        <end position="81"/>
    </location>
</feature>
<feature type="disulfide bond" evidence="2">
    <location>
        <begin position="40"/>
        <end position="64"/>
    </location>
</feature>
<feature type="disulfide bond" evidence="2">
    <location>
        <begin position="56"/>
        <end position="77"/>
    </location>
</feature>
<proteinExistence type="evidence at transcript level"/>
<reference key="1">
    <citation type="submission" date="2006-11" db="EMBL/GenBank/DDBJ databases">
        <title>BPTI petides from Chinese Daboia russellii siamensis.</title>
        <authorList>
            <person name="Guo C."/>
            <person name="McClean S."/>
            <person name="Shaw C."/>
            <person name="Rao P."/>
            <person name="Ye M."/>
            <person name="Anthony John B."/>
        </authorList>
    </citation>
    <scope>NUCLEOTIDE SEQUENCE [MRNA]</scope>
    <source>
        <strain>China</strain>
        <tissue>Venom gland</tissue>
    </source>
</reference>
<organism>
    <name type="scientific">Daboia siamensis</name>
    <name type="common">Eastern Russel's viper</name>
    <name type="synonym">Daboia russelii siamensis</name>
    <dbReference type="NCBI Taxonomy" id="343250"/>
    <lineage>
        <taxon>Eukaryota</taxon>
        <taxon>Metazoa</taxon>
        <taxon>Chordata</taxon>
        <taxon>Craniata</taxon>
        <taxon>Vertebrata</taxon>
        <taxon>Euteleostomi</taxon>
        <taxon>Lepidosauria</taxon>
        <taxon>Squamata</taxon>
        <taxon>Bifurcata</taxon>
        <taxon>Unidentata</taxon>
        <taxon>Episquamata</taxon>
        <taxon>Toxicofera</taxon>
        <taxon>Serpentes</taxon>
        <taxon>Colubroidea</taxon>
        <taxon>Viperidae</taxon>
        <taxon>Viperinae</taxon>
        <taxon>Daboia</taxon>
    </lineage>
</organism>
<evidence type="ECO:0000250" key="1"/>
<evidence type="ECO:0000255" key="2">
    <source>
        <dbReference type="PROSITE-ProRule" id="PRU00031"/>
    </source>
</evidence>
<evidence type="ECO:0000305" key="3"/>
<accession>A8Y7N6</accession>
<name>VKTC3_DABSI</name>